<name>Y1465_AQUAE</name>
<protein>
    <recommendedName>
        <fullName>Uncharacterized protein aq_1465</fullName>
    </recommendedName>
</protein>
<sequence length="130" mass="15289">MINRKVVYALSALLLFVYSYAFISDFSEFKNFLNIQYLKFKEFLFLLNNAEEKRRGTLNEDVLRQLTENLELVSIRYEYGKYEVKLRKVNAVELVSLLKELENYGKVEKLEAVDNTGRGIFDVKFIVSPL</sequence>
<proteinExistence type="inferred from homology"/>
<organism>
    <name type="scientific">Aquifex aeolicus (strain VF5)</name>
    <dbReference type="NCBI Taxonomy" id="224324"/>
    <lineage>
        <taxon>Bacteria</taxon>
        <taxon>Pseudomonadati</taxon>
        <taxon>Aquificota</taxon>
        <taxon>Aquificia</taxon>
        <taxon>Aquificales</taxon>
        <taxon>Aquificaceae</taxon>
        <taxon>Aquifex</taxon>
    </lineage>
</organism>
<feature type="signal peptide" evidence="1">
    <location>
        <begin position="1"/>
        <end position="23"/>
    </location>
</feature>
<feature type="chain" id="PRO_0000013625" description="Uncharacterized protein aq_1465">
    <location>
        <begin position="24"/>
        <end position="130"/>
    </location>
</feature>
<reference key="1">
    <citation type="journal article" date="1998" name="Nature">
        <title>The complete genome of the hyperthermophilic bacterium Aquifex aeolicus.</title>
        <authorList>
            <person name="Deckert G."/>
            <person name="Warren P.V."/>
            <person name="Gaasterland T."/>
            <person name="Young W.G."/>
            <person name="Lenox A.L."/>
            <person name="Graham D.E."/>
            <person name="Overbeek R."/>
            <person name="Snead M.A."/>
            <person name="Keller M."/>
            <person name="Aujay M."/>
            <person name="Huber R."/>
            <person name="Feldman R.A."/>
            <person name="Short J.M."/>
            <person name="Olsen G.J."/>
            <person name="Swanson R.V."/>
        </authorList>
    </citation>
    <scope>NUCLEOTIDE SEQUENCE [LARGE SCALE GENOMIC DNA]</scope>
    <source>
        <strain>VF5</strain>
    </source>
</reference>
<dbReference type="EMBL" id="AE000657">
    <property type="protein sequence ID" value="AAC07404.1"/>
    <property type="molecule type" value="Genomic_DNA"/>
</dbReference>
<dbReference type="PIR" id="C70427">
    <property type="entry name" value="C70427"/>
</dbReference>
<dbReference type="RefSeq" id="NP_214010.1">
    <property type="nucleotide sequence ID" value="NC_000918.1"/>
</dbReference>
<dbReference type="RefSeq" id="WP_010880948.1">
    <property type="nucleotide sequence ID" value="NC_000918.1"/>
</dbReference>
<dbReference type="SMR" id="O67445"/>
<dbReference type="STRING" id="224324.aq_1465"/>
<dbReference type="EnsemblBacteria" id="AAC07404">
    <property type="protein sequence ID" value="AAC07404"/>
    <property type="gene ID" value="aq_1465"/>
</dbReference>
<dbReference type="KEGG" id="aae:aq_1465"/>
<dbReference type="HOGENOM" id="CLU_158029_0_0_0"/>
<dbReference type="InParanoid" id="O67445"/>
<dbReference type="OrthoDB" id="15453at2"/>
<dbReference type="Proteomes" id="UP000000798">
    <property type="component" value="Chromosome"/>
</dbReference>
<gene>
    <name type="ordered locus">aq_1465</name>
</gene>
<evidence type="ECO:0000255" key="1"/>
<accession>O67445</accession>
<keyword id="KW-1185">Reference proteome</keyword>
<keyword id="KW-0732">Signal</keyword>